<proteinExistence type="inferred from homology"/>
<name>RL4_PELTS</name>
<comment type="function">
    <text evidence="1">One of the primary rRNA binding proteins, this protein initially binds near the 5'-end of the 23S rRNA. It is important during the early stages of 50S assembly. It makes multiple contacts with different domains of the 23S rRNA in the assembled 50S subunit and ribosome.</text>
</comment>
<comment type="function">
    <text evidence="1">Forms part of the polypeptide exit tunnel.</text>
</comment>
<comment type="subunit">
    <text evidence="1">Part of the 50S ribosomal subunit.</text>
</comment>
<comment type="similarity">
    <text evidence="1">Belongs to the universal ribosomal protein uL4 family.</text>
</comment>
<keyword id="KW-1185">Reference proteome</keyword>
<keyword id="KW-0687">Ribonucleoprotein</keyword>
<keyword id="KW-0689">Ribosomal protein</keyword>
<keyword id="KW-0694">RNA-binding</keyword>
<keyword id="KW-0699">rRNA-binding</keyword>
<protein>
    <recommendedName>
        <fullName evidence="1">Large ribosomal subunit protein uL4</fullName>
    </recommendedName>
    <alternativeName>
        <fullName evidence="3">50S ribosomal protein L4</fullName>
    </alternativeName>
</protein>
<dbReference type="EMBL" id="AP009389">
    <property type="protein sequence ID" value="BAF58502.1"/>
    <property type="molecule type" value="Genomic_DNA"/>
</dbReference>
<dbReference type="SMR" id="A5D5J1"/>
<dbReference type="STRING" id="370438.PTH_0321"/>
<dbReference type="KEGG" id="pth:PTH_0321"/>
<dbReference type="eggNOG" id="COG0088">
    <property type="taxonomic scope" value="Bacteria"/>
</dbReference>
<dbReference type="HOGENOM" id="CLU_041575_5_2_9"/>
<dbReference type="Proteomes" id="UP000006556">
    <property type="component" value="Chromosome"/>
</dbReference>
<dbReference type="GO" id="GO:1990904">
    <property type="term" value="C:ribonucleoprotein complex"/>
    <property type="evidence" value="ECO:0007669"/>
    <property type="project" value="UniProtKB-KW"/>
</dbReference>
<dbReference type="GO" id="GO:0005840">
    <property type="term" value="C:ribosome"/>
    <property type="evidence" value="ECO:0007669"/>
    <property type="project" value="UniProtKB-KW"/>
</dbReference>
<dbReference type="GO" id="GO:0019843">
    <property type="term" value="F:rRNA binding"/>
    <property type="evidence" value="ECO:0007669"/>
    <property type="project" value="UniProtKB-UniRule"/>
</dbReference>
<dbReference type="GO" id="GO:0003735">
    <property type="term" value="F:structural constituent of ribosome"/>
    <property type="evidence" value="ECO:0007669"/>
    <property type="project" value="InterPro"/>
</dbReference>
<dbReference type="GO" id="GO:0006412">
    <property type="term" value="P:translation"/>
    <property type="evidence" value="ECO:0007669"/>
    <property type="project" value="UniProtKB-UniRule"/>
</dbReference>
<dbReference type="Gene3D" id="3.40.1370.10">
    <property type="match status" value="1"/>
</dbReference>
<dbReference type="HAMAP" id="MF_01328_B">
    <property type="entry name" value="Ribosomal_uL4_B"/>
    <property type="match status" value="1"/>
</dbReference>
<dbReference type="InterPro" id="IPR002136">
    <property type="entry name" value="Ribosomal_uL4"/>
</dbReference>
<dbReference type="InterPro" id="IPR013005">
    <property type="entry name" value="Ribosomal_uL4-like"/>
</dbReference>
<dbReference type="InterPro" id="IPR023574">
    <property type="entry name" value="Ribosomal_uL4_dom_sf"/>
</dbReference>
<dbReference type="NCBIfam" id="TIGR03953">
    <property type="entry name" value="rplD_bact"/>
    <property type="match status" value="1"/>
</dbReference>
<dbReference type="PANTHER" id="PTHR10746">
    <property type="entry name" value="50S RIBOSOMAL PROTEIN L4"/>
    <property type="match status" value="1"/>
</dbReference>
<dbReference type="PANTHER" id="PTHR10746:SF6">
    <property type="entry name" value="LARGE RIBOSOMAL SUBUNIT PROTEIN UL4M"/>
    <property type="match status" value="1"/>
</dbReference>
<dbReference type="Pfam" id="PF00573">
    <property type="entry name" value="Ribosomal_L4"/>
    <property type="match status" value="1"/>
</dbReference>
<dbReference type="SUPFAM" id="SSF52166">
    <property type="entry name" value="Ribosomal protein L4"/>
    <property type="match status" value="1"/>
</dbReference>
<organism>
    <name type="scientific">Pelotomaculum thermopropionicum (strain DSM 13744 / JCM 10971 / SI)</name>
    <dbReference type="NCBI Taxonomy" id="370438"/>
    <lineage>
        <taxon>Bacteria</taxon>
        <taxon>Bacillati</taxon>
        <taxon>Bacillota</taxon>
        <taxon>Clostridia</taxon>
        <taxon>Eubacteriales</taxon>
        <taxon>Desulfotomaculaceae</taxon>
        <taxon>Pelotomaculum</taxon>
    </lineage>
</organism>
<gene>
    <name evidence="1" type="primary">rplD</name>
    <name type="ordered locus">PTH_0321</name>
</gene>
<accession>A5D5J1</accession>
<sequence>MPTVALYNTNGEQVGELALKDEIFGVEVHEPVLHDAVVMHLANRRLGTHDTKTRSEVRGGGRKPWRQKGTGRARHGSIRSPLWRGGGIIFGPHPRDYSYSLPRKVRRLALKSALSAKVNSGDILVLDELKLDQPKTKEMARILNNLKVDDALLVTAEKDEAVERSARNIPNIKPVQAALLNVYDILAYDKLVMTRDAVARVEEVFA</sequence>
<feature type="chain" id="PRO_1000086528" description="Large ribosomal subunit protein uL4">
    <location>
        <begin position="1"/>
        <end position="206"/>
    </location>
</feature>
<feature type="region of interest" description="Disordered" evidence="2">
    <location>
        <begin position="48"/>
        <end position="77"/>
    </location>
</feature>
<feature type="compositionally biased region" description="Basic and acidic residues" evidence="2">
    <location>
        <begin position="48"/>
        <end position="59"/>
    </location>
</feature>
<feature type="compositionally biased region" description="Basic residues" evidence="2">
    <location>
        <begin position="60"/>
        <end position="77"/>
    </location>
</feature>
<evidence type="ECO:0000255" key="1">
    <source>
        <dbReference type="HAMAP-Rule" id="MF_01328"/>
    </source>
</evidence>
<evidence type="ECO:0000256" key="2">
    <source>
        <dbReference type="SAM" id="MobiDB-lite"/>
    </source>
</evidence>
<evidence type="ECO:0000305" key="3"/>
<reference key="1">
    <citation type="journal article" date="2008" name="Genome Res.">
        <title>The genome of Pelotomaculum thermopropionicum reveals niche-associated evolution in anaerobic microbiota.</title>
        <authorList>
            <person name="Kosaka T."/>
            <person name="Kato S."/>
            <person name="Shimoyama T."/>
            <person name="Ishii S."/>
            <person name="Abe T."/>
            <person name="Watanabe K."/>
        </authorList>
    </citation>
    <scope>NUCLEOTIDE SEQUENCE [LARGE SCALE GENOMIC DNA]</scope>
    <source>
        <strain>DSM 13744 / JCM 10971 / SI</strain>
    </source>
</reference>